<accession>Q7RTR2</accession>
<accession>Q5EY36</accession>
<accession>Q8NF48</accession>
<accession>Q8NI01</accession>
<accession>Q8NI02</accession>
<accession>Q8TEL3</accession>
<evidence type="ECO:0000250" key="1">
    <source>
        <dbReference type="UniProtKB" id="Q5DU56"/>
    </source>
</evidence>
<evidence type="ECO:0000255" key="2">
    <source>
        <dbReference type="PROSITE-ProRule" id="PRU00136"/>
    </source>
</evidence>
<evidence type="ECO:0000256" key="3">
    <source>
        <dbReference type="SAM" id="MobiDB-lite"/>
    </source>
</evidence>
<evidence type="ECO:0000269" key="4">
    <source>
    </source>
</evidence>
<evidence type="ECO:0000269" key="5">
    <source>
    </source>
</evidence>
<evidence type="ECO:0000269" key="6">
    <source>
    </source>
</evidence>
<evidence type="ECO:0000269" key="7">
    <source>
    </source>
</evidence>
<evidence type="ECO:0000303" key="8">
    <source>
    </source>
</evidence>
<evidence type="ECO:0000303" key="9">
    <source>
    </source>
</evidence>
<evidence type="ECO:0000303" key="10">
    <source>
    </source>
</evidence>
<evidence type="ECO:0000303" key="11">
    <source ref="5"/>
</evidence>
<evidence type="ECO:0000305" key="12"/>
<name>NLRC3_HUMAN</name>
<dbReference type="EMBL" id="BK001112">
    <property type="protein sequence ID" value="DAA01245.1"/>
    <property type="molecule type" value="mRNA"/>
</dbReference>
<dbReference type="EMBL" id="AY601811">
    <property type="protein sequence ID" value="AAT48367.1"/>
    <property type="molecule type" value="mRNA"/>
</dbReference>
<dbReference type="EMBL" id="AK090431">
    <property type="protein sequence ID" value="BAC03412.1"/>
    <property type="status" value="ALT_INIT"/>
    <property type="molecule type" value="mRNA"/>
</dbReference>
<dbReference type="EMBL" id="AK074109">
    <property type="protein sequence ID" value="BAB84935.1"/>
    <property type="molecule type" value="mRNA"/>
</dbReference>
<dbReference type="EMBL" id="AF501291">
    <property type="protein sequence ID" value="AAM22459.1"/>
    <property type="molecule type" value="mRNA"/>
</dbReference>
<dbReference type="EMBL" id="AF501292">
    <property type="protein sequence ID" value="AAM22460.1"/>
    <property type="molecule type" value="mRNA"/>
</dbReference>
<dbReference type="CCDS" id="CCDS73817.1">
    <molecule id="Q7RTR2-1"/>
</dbReference>
<dbReference type="RefSeq" id="NP_849172.2">
    <molecule id="Q7RTR2-1"/>
    <property type="nucleotide sequence ID" value="NM_178844.4"/>
</dbReference>
<dbReference type="RefSeq" id="XP_047289725.1">
    <molecule id="Q7RTR2-1"/>
    <property type="nucleotide sequence ID" value="XM_047433769.1"/>
</dbReference>
<dbReference type="RefSeq" id="XP_054235777.1">
    <molecule id="Q7RTR2-1"/>
    <property type="nucleotide sequence ID" value="XM_054379802.1"/>
</dbReference>
<dbReference type="SMR" id="Q7RTR2"/>
<dbReference type="BioGRID" id="128254">
    <property type="interactions" value="8"/>
</dbReference>
<dbReference type="CORUM" id="Q7RTR2"/>
<dbReference type="FunCoup" id="Q7RTR2">
    <property type="interactions" value="488"/>
</dbReference>
<dbReference type="IntAct" id="Q7RTR2">
    <property type="interactions" value="3"/>
</dbReference>
<dbReference type="STRING" id="9606.ENSP00000352039"/>
<dbReference type="GlyGen" id="Q7RTR2">
    <property type="glycosylation" value="1 site, 1 O-linked glycan (1 site)"/>
</dbReference>
<dbReference type="iPTMnet" id="Q7RTR2"/>
<dbReference type="PhosphoSitePlus" id="Q7RTR2"/>
<dbReference type="BioMuta" id="NLRC3"/>
<dbReference type="jPOST" id="Q7RTR2"/>
<dbReference type="MassIVE" id="Q7RTR2"/>
<dbReference type="PaxDb" id="9606-ENSP00000352039"/>
<dbReference type="PeptideAtlas" id="Q7RTR2"/>
<dbReference type="ProteomicsDB" id="68886">
    <molecule id="Q7RTR2-1"/>
</dbReference>
<dbReference type="ProteomicsDB" id="68887">
    <molecule id="Q7RTR2-2"/>
</dbReference>
<dbReference type="ProteomicsDB" id="68888">
    <molecule id="Q7RTR2-3"/>
</dbReference>
<dbReference type="ProteomicsDB" id="68889">
    <molecule id="Q7RTR2-4"/>
</dbReference>
<dbReference type="TopDownProteomics" id="Q7RTR2-3">
    <molecule id="Q7RTR2-3"/>
</dbReference>
<dbReference type="Antibodypedia" id="56241">
    <property type="antibodies" value="48 antibodies from 20 providers"/>
</dbReference>
<dbReference type="DNASU" id="197358"/>
<dbReference type="Ensembl" id="ENST00000359128.10">
    <molecule id="Q7RTR2-1"/>
    <property type="protein sequence ID" value="ENSP00000352039.6"/>
    <property type="gene ID" value="ENSG00000167984.18"/>
</dbReference>
<dbReference type="Ensembl" id="ENST00000615877.4">
    <molecule id="Q7RTR2-3"/>
    <property type="protein sequence ID" value="ENSP00000482989.1"/>
    <property type="gene ID" value="ENSG00000167984.18"/>
</dbReference>
<dbReference type="GeneID" id="197358"/>
<dbReference type="KEGG" id="hsa:197358"/>
<dbReference type="MANE-Select" id="ENST00000359128.10">
    <property type="protein sequence ID" value="ENSP00000352039.6"/>
    <property type="RefSeq nucleotide sequence ID" value="NM_178844.4"/>
    <property type="RefSeq protein sequence ID" value="NP_849172.2"/>
</dbReference>
<dbReference type="UCSC" id="uc032dpc.2">
    <molecule id="Q7RTR2-1"/>
    <property type="organism name" value="human"/>
</dbReference>
<dbReference type="AGR" id="HGNC:29889"/>
<dbReference type="CTD" id="197358"/>
<dbReference type="DisGeNET" id="197358"/>
<dbReference type="GeneCards" id="NLRC3"/>
<dbReference type="HGNC" id="HGNC:29889">
    <property type="gene designation" value="NLRC3"/>
</dbReference>
<dbReference type="HPA" id="ENSG00000167984">
    <property type="expression patterns" value="Tissue enhanced (intestine, lymphoid tissue)"/>
</dbReference>
<dbReference type="MIM" id="615648">
    <property type="type" value="gene"/>
</dbReference>
<dbReference type="neXtProt" id="NX_Q7RTR2"/>
<dbReference type="OpenTargets" id="ENSG00000167984"/>
<dbReference type="PharmGKB" id="PA162397626"/>
<dbReference type="VEuPathDB" id="HostDB:ENSG00000167984"/>
<dbReference type="eggNOG" id="KOG4308">
    <property type="taxonomic scope" value="Eukaryota"/>
</dbReference>
<dbReference type="GeneTree" id="ENSGT00940000159861"/>
<dbReference type="HOGENOM" id="CLU_002274_3_0_1"/>
<dbReference type="InParanoid" id="Q7RTR2"/>
<dbReference type="OMA" id="IPCICWM"/>
<dbReference type="OrthoDB" id="120976at2759"/>
<dbReference type="PAN-GO" id="Q7RTR2">
    <property type="GO annotations" value="3 GO annotations based on evolutionary models"/>
</dbReference>
<dbReference type="PhylomeDB" id="Q7RTR2"/>
<dbReference type="PathwayCommons" id="Q7RTR2"/>
<dbReference type="Reactome" id="R-HSA-3270619">
    <property type="pathway name" value="IRF3-mediated induction of type I IFN"/>
</dbReference>
<dbReference type="SignaLink" id="Q7RTR2"/>
<dbReference type="BioGRID-ORCS" id="197358">
    <property type="hits" value="13 hits in 320 CRISPR screens"/>
</dbReference>
<dbReference type="ChiTaRS" id="NLRC3">
    <property type="organism name" value="human"/>
</dbReference>
<dbReference type="GeneWiki" id="NLRC3"/>
<dbReference type="GenomeRNAi" id="197358"/>
<dbReference type="Pharos" id="Q7RTR2">
    <property type="development level" value="Tbio"/>
</dbReference>
<dbReference type="PRO" id="PR:Q7RTR2"/>
<dbReference type="Proteomes" id="UP000005640">
    <property type="component" value="Chromosome 16"/>
</dbReference>
<dbReference type="RNAct" id="Q7RTR2">
    <property type="molecule type" value="protein"/>
</dbReference>
<dbReference type="Bgee" id="ENSG00000167984">
    <property type="expression patterns" value="Expressed in thymus and 122 other cell types or tissues"/>
</dbReference>
<dbReference type="ExpressionAtlas" id="Q7RTR2">
    <property type="expression patterns" value="baseline and differential"/>
</dbReference>
<dbReference type="GO" id="GO:0034451">
    <property type="term" value="C:centriolar satellite"/>
    <property type="evidence" value="ECO:0000314"/>
    <property type="project" value="HPA"/>
</dbReference>
<dbReference type="GO" id="GO:0005737">
    <property type="term" value="C:cytoplasm"/>
    <property type="evidence" value="ECO:0000314"/>
    <property type="project" value="UniProtKB"/>
</dbReference>
<dbReference type="GO" id="GO:0005829">
    <property type="term" value="C:cytosol"/>
    <property type="evidence" value="ECO:0000314"/>
    <property type="project" value="HPA"/>
</dbReference>
<dbReference type="GO" id="GO:0043231">
    <property type="term" value="C:intracellular membrane-bounded organelle"/>
    <property type="evidence" value="ECO:0000314"/>
    <property type="project" value="HPA"/>
</dbReference>
<dbReference type="GO" id="GO:0048471">
    <property type="term" value="C:perinuclear region of cytoplasm"/>
    <property type="evidence" value="ECO:0000314"/>
    <property type="project" value="UniProtKB"/>
</dbReference>
<dbReference type="GO" id="GO:0005524">
    <property type="term" value="F:ATP binding"/>
    <property type="evidence" value="ECO:0007669"/>
    <property type="project" value="UniProtKB-KW"/>
</dbReference>
<dbReference type="GO" id="GO:0036312">
    <property type="term" value="F:phosphatidylinositol 3-kinase regulatory subunit binding"/>
    <property type="evidence" value="ECO:0000250"/>
    <property type="project" value="UniProtKB"/>
</dbReference>
<dbReference type="GO" id="GO:0007249">
    <property type="term" value="P:canonical NF-kappaB signal transduction"/>
    <property type="evidence" value="ECO:0000314"/>
    <property type="project" value="UniProtKB"/>
</dbReference>
<dbReference type="GO" id="GO:0043124">
    <property type="term" value="P:negative regulation of canonical NF-kappaB signal transduction"/>
    <property type="evidence" value="ECO:0000315"/>
    <property type="project" value="MGI"/>
</dbReference>
<dbReference type="GO" id="GO:1900016">
    <property type="term" value="P:negative regulation of cytokine production involved in inflammatory response"/>
    <property type="evidence" value="ECO:0000250"/>
    <property type="project" value="UniProtKB"/>
</dbReference>
<dbReference type="GO" id="GO:0050680">
    <property type="term" value="P:negative regulation of epithelial cell proliferation"/>
    <property type="evidence" value="ECO:0000250"/>
    <property type="project" value="UniProtKB"/>
</dbReference>
<dbReference type="GO" id="GO:0048147">
    <property type="term" value="P:negative regulation of fibroblast proliferation"/>
    <property type="evidence" value="ECO:0000250"/>
    <property type="project" value="UniProtKB"/>
</dbReference>
<dbReference type="GO" id="GO:0050728">
    <property type="term" value="P:negative regulation of inflammatory response"/>
    <property type="evidence" value="ECO:0000314"/>
    <property type="project" value="UniProtKB"/>
</dbReference>
<dbReference type="GO" id="GO:0045824">
    <property type="term" value="P:negative regulation of innate immune response"/>
    <property type="evidence" value="ECO:0000250"/>
    <property type="project" value="UniProtKB"/>
</dbReference>
<dbReference type="GO" id="GO:0032687">
    <property type="term" value="P:negative regulation of interferon-alpha production"/>
    <property type="evidence" value="ECO:0000250"/>
    <property type="project" value="UniProtKB"/>
</dbReference>
<dbReference type="GO" id="GO:0032688">
    <property type="term" value="P:negative regulation of interferon-beta production"/>
    <property type="evidence" value="ECO:0000250"/>
    <property type="project" value="UniProtKB"/>
</dbReference>
<dbReference type="GO" id="GO:0032715">
    <property type="term" value="P:negative regulation of interleukin-6 production"/>
    <property type="evidence" value="ECO:0000314"/>
    <property type="project" value="CACAO"/>
</dbReference>
<dbReference type="GO" id="GO:0032088">
    <property type="term" value="P:negative regulation of NF-kappaB transcription factor activity"/>
    <property type="evidence" value="ECO:0000314"/>
    <property type="project" value="UniProtKB"/>
</dbReference>
<dbReference type="GO" id="GO:1900226">
    <property type="term" value="P:negative regulation of NLRP3 inflammasome complex assembly"/>
    <property type="evidence" value="ECO:0000314"/>
    <property type="project" value="UniProtKB"/>
</dbReference>
<dbReference type="GO" id="GO:1901223">
    <property type="term" value="P:negative regulation of non-canonical NF-kappaB signal transduction"/>
    <property type="evidence" value="ECO:0000314"/>
    <property type="project" value="UniProtKB"/>
</dbReference>
<dbReference type="GO" id="GO:0051898">
    <property type="term" value="P:negative regulation of phosphatidylinositol 3-kinase/protein kinase B signal transduction"/>
    <property type="evidence" value="ECO:0000250"/>
    <property type="project" value="UniProtKB"/>
</dbReference>
<dbReference type="GO" id="GO:0032720">
    <property type="term" value="P:negative regulation of tumor necrosis factor production"/>
    <property type="evidence" value="ECO:0000314"/>
    <property type="project" value="CACAO"/>
</dbReference>
<dbReference type="GO" id="GO:0042110">
    <property type="term" value="P:T cell activation"/>
    <property type="evidence" value="ECO:0000270"/>
    <property type="project" value="UniProtKB"/>
</dbReference>
<dbReference type="FunFam" id="3.40.50.300:FF:001062">
    <property type="entry name" value="NLR family CARD domain containing 3"/>
    <property type="match status" value="1"/>
</dbReference>
<dbReference type="FunFam" id="3.80.10.10:FF:000236">
    <property type="entry name" value="NLR family CARD domain containing 3"/>
    <property type="match status" value="1"/>
</dbReference>
<dbReference type="FunFam" id="3.80.10.10:FF:000243">
    <property type="entry name" value="NLR family CARD domain containing 3"/>
    <property type="match status" value="1"/>
</dbReference>
<dbReference type="FunFam" id="3.80.10.10:FF:000274">
    <property type="entry name" value="NLR family CARD domain containing 3"/>
    <property type="match status" value="1"/>
</dbReference>
<dbReference type="FunFam" id="3.80.10.10:FF:000582">
    <property type="entry name" value="NLR family CARD domain containing 3"/>
    <property type="match status" value="1"/>
</dbReference>
<dbReference type="Gene3D" id="3.40.50.300">
    <property type="entry name" value="P-loop containing nucleotide triphosphate hydrolases"/>
    <property type="match status" value="1"/>
</dbReference>
<dbReference type="Gene3D" id="3.80.10.10">
    <property type="entry name" value="Ribonuclease Inhibitor"/>
    <property type="match status" value="4"/>
</dbReference>
<dbReference type="InterPro" id="IPR001611">
    <property type="entry name" value="Leu-rich_rpt"/>
</dbReference>
<dbReference type="InterPro" id="IPR032675">
    <property type="entry name" value="LRR_dom_sf"/>
</dbReference>
<dbReference type="InterPro" id="IPR007111">
    <property type="entry name" value="NACHT_NTPase"/>
</dbReference>
<dbReference type="InterPro" id="IPR051261">
    <property type="entry name" value="NLR"/>
</dbReference>
<dbReference type="InterPro" id="IPR041267">
    <property type="entry name" value="NLRP_HD2"/>
</dbReference>
<dbReference type="InterPro" id="IPR041075">
    <property type="entry name" value="NOD1/2_WH"/>
</dbReference>
<dbReference type="InterPro" id="IPR027417">
    <property type="entry name" value="P-loop_NTPase"/>
</dbReference>
<dbReference type="PANTHER" id="PTHR24106">
    <property type="entry name" value="NACHT, LRR AND CARD DOMAINS-CONTAINING"/>
    <property type="match status" value="1"/>
</dbReference>
<dbReference type="Pfam" id="PF13516">
    <property type="entry name" value="LRR_6"/>
    <property type="match status" value="12"/>
</dbReference>
<dbReference type="Pfam" id="PF05729">
    <property type="entry name" value="NACHT"/>
    <property type="match status" value="1"/>
</dbReference>
<dbReference type="Pfam" id="PF17776">
    <property type="entry name" value="NLRC4_HD2"/>
    <property type="match status" value="1"/>
</dbReference>
<dbReference type="Pfam" id="PF17779">
    <property type="entry name" value="NOD2_WH"/>
    <property type="match status" value="1"/>
</dbReference>
<dbReference type="SMART" id="SM00368">
    <property type="entry name" value="LRR_RI"/>
    <property type="match status" value="14"/>
</dbReference>
<dbReference type="SUPFAM" id="SSF52047">
    <property type="entry name" value="RNI-like"/>
    <property type="match status" value="2"/>
</dbReference>
<dbReference type="PROSITE" id="PS50837">
    <property type="entry name" value="NACHT"/>
    <property type="match status" value="1"/>
</dbReference>
<keyword id="KW-0025">Alternative splicing</keyword>
<keyword id="KW-0067">ATP-binding</keyword>
<keyword id="KW-0963">Cytoplasm</keyword>
<keyword id="KW-0433">Leucine-rich repeat</keyword>
<keyword id="KW-0547">Nucleotide-binding</keyword>
<keyword id="KW-1267">Proteomics identification</keyword>
<keyword id="KW-1185">Reference proteome</keyword>
<keyword id="KW-0677">Repeat</keyword>
<gene>
    <name type="primary">NLRC3</name>
    <name type="synonym">NOD3</name>
</gene>
<reference key="1">
    <citation type="journal article" date="2003" name="Nat. Rev. Immunol.">
        <title>NODs: intracellular proteins involved in inflammation and apoptosis.</title>
        <authorList>
            <person name="Inohara N."/>
            <person name="Nunez G."/>
        </authorList>
    </citation>
    <scope>NUCLEOTIDE SEQUENCE [MRNA] (ISOFORM 2)</scope>
</reference>
<reference key="2">
    <citation type="journal article" date="2005" name="J. Biol. Chem.">
        <title>CATERPILLER 16.2 (CLR16.2), a novel NBD/LRR family member that negatively regulates T cell function.</title>
        <authorList>
            <person name="Conti B.J."/>
            <person name="Davis B.K."/>
            <person name="Zhang J."/>
            <person name="O'Connor W. Jr."/>
            <person name="Williams K.L."/>
            <person name="Ting J.P.-Y."/>
        </authorList>
    </citation>
    <scope>NUCLEOTIDE SEQUENCE [MRNA] (ISOFORM 1)</scope>
    <scope>FUNCTION</scope>
    <scope>SUBCELLULAR LOCATION</scope>
    <scope>INDUCTION</scope>
</reference>
<reference key="3">
    <citation type="journal article" date="2003" name="DNA Res.">
        <title>Characterization of long cDNA clones from human adult spleen. II. The complete sequences of 81 cDNA clones.</title>
        <authorList>
            <person name="Jikuya H."/>
            <person name="Takano J."/>
            <person name="Kikuno R."/>
            <person name="Hirosawa M."/>
            <person name="Nagase T."/>
            <person name="Nomura N."/>
            <person name="Ohara O."/>
        </authorList>
    </citation>
    <scope>NUCLEOTIDE SEQUENCE [LARGE SCALE MRNA] (ISOFORM 3)</scope>
    <source>
        <tissue>Spleen</tissue>
    </source>
</reference>
<reference key="4">
    <citation type="submission" date="2002-07" db="EMBL/GenBank/DDBJ databases">
        <title>The nucleotide sequence of a long cDNA clone isolated from human spleen.</title>
        <authorList>
            <person name="Jikuya H."/>
            <person name="Takano J."/>
            <person name="Nomura N."/>
            <person name="Kikuno R."/>
            <person name="Nagase T."/>
            <person name="Ohara O."/>
        </authorList>
    </citation>
    <scope>NUCLEOTIDE SEQUENCE [LARGE SCALE MRNA] OF 567-1065 (ISOFORM 1)</scope>
    <source>
        <tissue>Spleen</tissue>
    </source>
</reference>
<reference key="5">
    <citation type="submission" date="2002-04" db="EMBL/GenBank/DDBJ databases">
        <title>Leucine-rich repeat containing protein.</title>
        <authorList>
            <person name="Huse K."/>
            <person name="Platzer M."/>
            <person name="Wen G."/>
            <person name="Hampe J."/>
            <person name="Schreiber S."/>
        </authorList>
    </citation>
    <scope>NUCLEOTIDE SEQUENCE [MRNA] OF 701-923 (ISOFORMS 1 AND 4)</scope>
</reference>
<reference key="6">
    <citation type="journal article" date="2012" name="Nat. Immunol.">
        <title>The innate immune sensor NLRC3 attenuates Toll-like receptor signaling via modification of the signaling adaptor TRAF6 and transcription factor NF-kappaB.</title>
        <authorList>
            <person name="Schneider M."/>
            <person name="Zimmermann A.G."/>
            <person name="Roberts R.A."/>
            <person name="Zhang L."/>
            <person name="Swanson K.V."/>
            <person name="Wen H."/>
            <person name="Davis B.K."/>
            <person name="Allen I.C."/>
            <person name="Holl E.K."/>
            <person name="Ye Z."/>
            <person name="Rahman A.H."/>
            <person name="Conti B.J."/>
            <person name="Eitas T.K."/>
            <person name="Koller B.H."/>
            <person name="Ting J.P."/>
        </authorList>
    </citation>
    <scope>FUNCTION</scope>
    <scope>INTERACTION WITH TRAF6</scope>
    <scope>INDUCTION BY LPS</scope>
    <scope>MUTAGENESIS OF 457-SER--GLU-460 AND 582-SER--GLU-585</scope>
</reference>
<reference key="7">
    <citation type="journal article" date="2014" name="Immunity">
        <title>NLRC3, a member of the NLR family of proteins, is a negative regulator of innate immune signaling induced by the DNA sensor STING.</title>
        <authorList>
            <person name="Zhang L."/>
            <person name="Mo J."/>
            <person name="Swanson K.V."/>
            <person name="Wen H."/>
            <person name="Petrucelli A."/>
            <person name="Gregory S.M."/>
            <person name="Zhang Z."/>
            <person name="Schneider M."/>
            <person name="Jiang Y."/>
            <person name="Fitzgerald K.A."/>
            <person name="Ouyang S."/>
            <person name="Liu Z.J."/>
            <person name="Damania B."/>
            <person name="Shu H.B."/>
            <person name="Duncan J.A."/>
            <person name="Ting J.P."/>
        </authorList>
    </citation>
    <scope>INTERACTION WITH TBK1 AND TMEM173</scope>
    <scope>SUBCELLULAR LOCATION</scope>
</reference>
<reference key="8">
    <citation type="journal article" date="2015" name="J. Innate Immun.">
        <title>Overexpressed NLRC3 acts as an anti-inflammatory cytosolic protein.</title>
        <authorList>
            <person name="Gueltekin Y."/>
            <person name="Eren E."/>
            <person name="Oezoeren N."/>
        </authorList>
    </citation>
    <scope>FUNCTION</scope>
    <scope>INTERACTION WITH CASP1; CASP5 AND PYCARD</scope>
    <scope>SUBCELLULAR LOCATION</scope>
</reference>
<comment type="function">
    <text evidence="1 4 5 7">Negative regulator of the innate immune response (PubMed:15705585, PubMed:22863753, PubMed:25277106). Attenuates signaling pathways activated by Toll-like receptors (TLRs) and the DNA sensor STING/TMEM173 in response to pathogen-associated molecular patterns, such as intracellular poly(dA:dT), but not poly(I:C), or in response to DNA virus infection, including that of Herpes simplex virus 1 (HSV1) (By similarity) (PubMed:22863753). May affect TLR4 signaling by acting at the level of TRAF6 ubiquitination, decreasing the activating 'Lys-63'-linked ubiquitination and leaving unchanged the degradative 'Lys-48'-linked ubiquitination (PubMed:22863753). Inhibits the PI3K-AKT-mTOR pathway possibly by directly interacting with the posphatidylinositol 3-kinase regulatory subunit p85 (PIK3R1/PIK3R2) and disrupting the association between PIK3R1/PIK3R2 and the catalytic subunit p110 (PIK3CA/PIK3CB/PIK3CD) and reducing PIK3R1/PIK3R2 activation. Via its regulation of the PI3K-AKT-mTOR pathway, controls cell proliferation, predominantly in intestinal epithelial cells (By similarity). May also affect NOD1- or NOD2-mediated NF-kappa-B activation (PubMed:25277106). Might also affect the inflammatory response by preventing NLRP3 inflammasome formation, CASP1 cleavage and IL1B maturation (PubMed:25277106).</text>
</comment>
<comment type="subunit">
    <text evidence="1 5 6 7">Directly interacts (via CARD) with TMEM173/STING; this interaction reduces TMEM173 trafficking to the perinuclear region in response to interferon stimulatory DNA. Also interacts, but to a lesser extent, with TBK1 (PubMed:24560620). Interacts with TRAF6; this interaction results in decreased TRAF6 'Lys-63'-linked polyubiquitination, but leaves 'Lys-48'-linked chains unchanged, promoting TRAF6 protein degradation (PubMed:22863753). Interacts with PIK3R1/PIK3R2; this interaction disrupts the association between PIK3R1/PIK3R2 and the p110 catalytic subunit PIK3CA/PIK3CB/PIK3CD and reduces PIK3R1/PIK3R2 activation (By similarity). Weakly interacts with PYCARD/ASC. Interacts with CASP1 and CASP5 (PubMed:25277106).</text>
</comment>
<comment type="interaction">
    <interactant intactId="EBI-1042625">
        <id>Q7RTR2</id>
    </interactant>
    <interactant intactId="EBI-751215">
        <id>Q9ULZ3</id>
        <label>PYCARD</label>
    </interactant>
    <organismsDiffer>false</organismsDiffer>
    <experiments>3</experiments>
</comment>
<comment type="subcellular location">
    <subcellularLocation>
        <location evidence="4 6 7">Cytoplasm</location>
    </subcellularLocation>
</comment>
<comment type="alternative products">
    <event type="alternative splicing"/>
    <isoform>
        <id>Q7RTR2-1</id>
        <name>1</name>
        <sequence type="displayed"/>
    </isoform>
    <isoform>
        <id>Q7RTR2-2</id>
        <name>2</name>
        <sequence type="described" ref="VSP_027135"/>
    </isoform>
    <isoform>
        <id>Q7RTR2-3</id>
        <name>3</name>
        <sequence type="described" ref="VSP_027136 VSP_027137"/>
    </isoform>
    <isoform>
        <id>Q7RTR2-4</id>
        <name>4</name>
        <sequence type="described" ref="VSP_027138"/>
    </isoform>
</comment>
<comment type="induction">
    <text evidence="4 5">In primary T-cells, down-regulated upon T-cell receptor activation (PubMed:15705585). Down-regulated in peritoneal macrophages soon after the beginning of LPS stimulation. Levels start increasing again after 3 days of LPS treatment (PubMed:22863753).</text>
</comment>
<comment type="domain">
    <text evidence="6">The leucine-rich repeat domain may reduce the interaction with TMEM173/STING.</text>
</comment>
<comment type="similarity">
    <text evidence="12">Belongs to the NLRP family.</text>
</comment>
<comment type="sequence caution" evidence="12">
    <conflict type="erroneous initiation">
        <sequence resource="EMBL-CDS" id="BAC03412"/>
    </conflict>
    <text>Extended N-terminus.</text>
</comment>
<organism>
    <name type="scientific">Homo sapiens</name>
    <name type="common">Human</name>
    <dbReference type="NCBI Taxonomy" id="9606"/>
    <lineage>
        <taxon>Eukaryota</taxon>
        <taxon>Metazoa</taxon>
        <taxon>Chordata</taxon>
        <taxon>Craniata</taxon>
        <taxon>Vertebrata</taxon>
        <taxon>Euteleostomi</taxon>
        <taxon>Mammalia</taxon>
        <taxon>Eutheria</taxon>
        <taxon>Euarchontoglires</taxon>
        <taxon>Primates</taxon>
        <taxon>Haplorrhini</taxon>
        <taxon>Catarrhini</taxon>
        <taxon>Hominidae</taxon>
        <taxon>Homo</taxon>
    </lineage>
</organism>
<proteinExistence type="evidence at protein level"/>
<feature type="chain" id="PRO_0000296187" description="NLR family CARD domain-containing protein 3">
    <location>
        <begin position="1"/>
        <end position="1065"/>
    </location>
</feature>
<feature type="domain" description="NACHT" evidence="2">
    <location>
        <begin position="139"/>
        <end position="460"/>
    </location>
</feature>
<feature type="repeat" description="LRR 1">
    <location>
        <begin position="617"/>
        <end position="639"/>
    </location>
</feature>
<feature type="repeat" description="LRR 2">
    <location>
        <begin position="641"/>
        <end position="663"/>
    </location>
</feature>
<feature type="repeat" description="LRR 3">
    <location>
        <begin position="665"/>
        <end position="688"/>
    </location>
</feature>
<feature type="repeat" description="LRR 4">
    <location>
        <begin position="693"/>
        <end position="716"/>
    </location>
</feature>
<feature type="repeat" description="LRR 5">
    <location>
        <begin position="721"/>
        <end position="744"/>
    </location>
</feature>
<feature type="repeat" description="LRR 6">
    <location>
        <begin position="749"/>
        <end position="772"/>
    </location>
</feature>
<feature type="repeat" description="LRR 7">
    <location>
        <begin position="777"/>
        <end position="800"/>
    </location>
</feature>
<feature type="repeat" description="LRR 8">
    <location>
        <begin position="805"/>
        <end position="828"/>
    </location>
</feature>
<feature type="repeat" description="LRR 9">
    <location>
        <begin position="833"/>
        <end position="856"/>
    </location>
</feature>
<feature type="repeat" description="LRR 10">
    <location>
        <begin position="861"/>
        <end position="884"/>
    </location>
</feature>
<feature type="repeat" description="LRR 11">
    <location>
        <begin position="889"/>
        <end position="912"/>
    </location>
</feature>
<feature type="repeat" description="LRR 12">
    <location>
        <begin position="917"/>
        <end position="940"/>
    </location>
</feature>
<feature type="repeat" description="LRR 13">
    <location>
        <begin position="945"/>
        <end position="968"/>
    </location>
</feature>
<feature type="repeat" description="LRR 14">
    <location>
        <begin position="973"/>
        <end position="996"/>
    </location>
</feature>
<feature type="repeat" description="LRR 15">
    <location>
        <begin position="1001"/>
        <end position="1029"/>
    </location>
</feature>
<feature type="repeat" description="LRR 16">
    <location>
        <begin position="1031"/>
        <end position="1052"/>
    </location>
</feature>
<feature type="region of interest" description="Disordered" evidence="3">
    <location>
        <begin position="1"/>
        <end position="62"/>
    </location>
</feature>
<feature type="short sequence motif" description="TRAF6-binding" evidence="5">
    <location>
        <begin position="457"/>
        <end position="460"/>
    </location>
</feature>
<feature type="compositionally biased region" description="Basic and acidic residues" evidence="3">
    <location>
        <begin position="1"/>
        <end position="10"/>
    </location>
</feature>
<feature type="binding site" evidence="2">
    <location>
        <begin position="145"/>
        <end position="152"/>
    </location>
    <ligand>
        <name>ATP</name>
        <dbReference type="ChEBI" id="CHEBI:30616"/>
    </ligand>
</feature>
<feature type="splice variant" id="VSP_027135" description="In isoform 2." evidence="9">
    <original>M</original>
    <variation>MEMDAPRPPSLAVPGAASRPGRLLDGGHGRQQVQALSSQLLEVIPDS</variation>
    <location>
        <position position="1"/>
    </location>
</feature>
<feature type="splice variant" id="VSP_027136" description="In isoform 3." evidence="8">
    <original>SLQGNTVRDDGARSMAEALASNRTLSMLHLQKNS</original>
    <variation>RVKFMYHKIDCFRRVPEADACNPSTLGGQGRWIT</variation>
    <location>
        <begin position="728"/>
        <end position="761"/>
    </location>
</feature>
<feature type="splice variant" id="VSP_027137" description="In isoform 3." evidence="8">
    <location>
        <begin position="762"/>
        <end position="1065"/>
    </location>
</feature>
<feature type="splice variant" id="VSP_027138" description="In isoform 4." evidence="11">
    <location>
        <begin position="869"/>
        <end position="896"/>
    </location>
</feature>
<feature type="sequence variant" id="VAR_034606" description="In dbSNP:rs8057436.">
    <original>V</original>
    <variation>M</variation>
    <location>
        <position position="567"/>
    </location>
</feature>
<feature type="mutagenesis site" description="Strong decrease of TRAF6-binding." evidence="5">
    <original>SLQE</original>
    <variation>AAAA</variation>
    <location>
        <begin position="457"/>
        <end position="460"/>
    </location>
</feature>
<feature type="mutagenesis site" description="Almost no effect on TRAF6-binding." evidence="5">
    <original>SVEE</original>
    <variation>AAAA</variation>
    <location>
        <begin position="582"/>
        <end position="585"/>
    </location>
</feature>
<feature type="sequence conflict" description="In Ref. 1; DAA01245." evidence="12" ref="1">
    <original>Q</original>
    <variation>H</variation>
    <location>
        <position position="41"/>
    </location>
</feature>
<sequence length="1065" mass="114658">MRKQEVRTGREAGQGHGTGSPAEQVKALMDLLAGKGSQGSQAPQALDRTPDAPLGPCSNDSRIQRHRKALLSKVGGGPELGGPWHRLASLLLVEGLTDLQLREHDFTQVEATRGGGHPARTVALDRLFLPLSRVSVPPRVSITIGVAGMGKTTLVRHFVRLWAHGQVGKDFSLVLPLTFRDLNTHEKLCADRLICSVFPHVGEPSLAVAVPARALLILDGLDECRTPLDFSNTVACTDPKKEIPVDHLITNIIRGNLFPEVSIWITSRPSASGQIPGGLVDRMTEIRGFNEEEIKVCLEQMFPEDQALLGWMLSQVQADRALYLMCTVPAFCRLTGMALGHLWRSRTGPQDAELWPPRTLCELYSWYFRMALSGEGQEKGKASPRIEQVAHGGRKMVGTLGRLAFHGLLKKKYVFYEQDMKAFGVDLALLQGAPCSCFLQREETLASSVAYCFTHLSLQEFVAAAYYYGASRRAIFDLFTESGVSWPRLGFLTHFRSAAQRAMQAEDGRLDVFLRFLSGLLSPRVNALLAGSLLAQGEHQAYRTQVAELLQGCLRPDAAVCARAINVLHCLHELQHTELARSVEEAMESGALARLTGPAHRAALAYLLQVSDACAQEANLSLSLSQGVLQSLLPQLLYCRKLRLDTNQFQDPVMELLGSVLSGKDCRIQKISLAENQISNKGAKALARSLLVNRSLTSLDLRGNSIGPQGAKALADALKINRTLTSLSLQGNTVRDDGARSMAEALASNRTLSMLHLQKNSIGPMGAQRMADALKQNRSLKELMFSSNSIGDGGAKALAEALKVNQGLESLDLQSNSISDAGVAALMGALCTNQTLLSLSLRENSISPEGAQAIAHALCANSTLKNLDLTANLLHDQGARAIAVAVRENRTLTSLHLQWNFIQAGAAQALGQALQLNRSLTSLDLQENAIGDDGACAVARALKVNTALTALYLQVASIGASGAQVLGEALAVNRTLEILDLRGNAIGVAGAKALANALKVNSSLRRLNLQENSLGMDGAICIATALSGNHRLQHINLQGNHIGDSGARMISEAIKTNAPTCTVEM</sequence>
<protein>
    <recommendedName>
        <fullName>NLR family CARD domain-containing protein 3</fullName>
    </recommendedName>
    <alternativeName>
        <fullName>CARD15-like protein</fullName>
    </alternativeName>
    <alternativeName>
        <fullName evidence="10">Caterpiller protein 16.2</fullName>
        <shortName evidence="10">CLR16.2</shortName>
    </alternativeName>
    <alternativeName>
        <fullName>NACHT, LRR and CARD domains-containing protein 3</fullName>
    </alternativeName>
    <alternativeName>
        <fullName>Nucleotide-binding oligomerization domain protein 3</fullName>
    </alternativeName>
</protein>